<accession>Q48CH3</accession>
<dbReference type="EC" id="2.5.1.6" evidence="1"/>
<dbReference type="EMBL" id="CP000058">
    <property type="protein sequence ID" value="AAZ36155.1"/>
    <property type="molecule type" value="Genomic_DNA"/>
</dbReference>
<dbReference type="RefSeq" id="WP_011169755.1">
    <property type="nucleotide sequence ID" value="NC_005773.3"/>
</dbReference>
<dbReference type="SMR" id="Q48CH3"/>
<dbReference type="KEGG" id="psp:PSPPH_4823"/>
<dbReference type="eggNOG" id="COG0192">
    <property type="taxonomic scope" value="Bacteria"/>
</dbReference>
<dbReference type="HOGENOM" id="CLU_041802_1_1_6"/>
<dbReference type="UniPathway" id="UPA00315">
    <property type="reaction ID" value="UER00080"/>
</dbReference>
<dbReference type="Proteomes" id="UP000000551">
    <property type="component" value="Chromosome"/>
</dbReference>
<dbReference type="GO" id="GO:0005737">
    <property type="term" value="C:cytoplasm"/>
    <property type="evidence" value="ECO:0007669"/>
    <property type="project" value="UniProtKB-SubCell"/>
</dbReference>
<dbReference type="GO" id="GO:0005524">
    <property type="term" value="F:ATP binding"/>
    <property type="evidence" value="ECO:0007669"/>
    <property type="project" value="UniProtKB-UniRule"/>
</dbReference>
<dbReference type="GO" id="GO:0000287">
    <property type="term" value="F:magnesium ion binding"/>
    <property type="evidence" value="ECO:0007669"/>
    <property type="project" value="UniProtKB-UniRule"/>
</dbReference>
<dbReference type="GO" id="GO:0004478">
    <property type="term" value="F:methionine adenosyltransferase activity"/>
    <property type="evidence" value="ECO:0007669"/>
    <property type="project" value="UniProtKB-UniRule"/>
</dbReference>
<dbReference type="GO" id="GO:0006730">
    <property type="term" value="P:one-carbon metabolic process"/>
    <property type="evidence" value="ECO:0007669"/>
    <property type="project" value="UniProtKB-KW"/>
</dbReference>
<dbReference type="GO" id="GO:0006556">
    <property type="term" value="P:S-adenosylmethionine biosynthetic process"/>
    <property type="evidence" value="ECO:0007669"/>
    <property type="project" value="UniProtKB-UniRule"/>
</dbReference>
<dbReference type="CDD" id="cd18079">
    <property type="entry name" value="S-AdoMet_synt"/>
    <property type="match status" value="1"/>
</dbReference>
<dbReference type="FunFam" id="3.30.300.10:FF:000003">
    <property type="entry name" value="S-adenosylmethionine synthase"/>
    <property type="match status" value="1"/>
</dbReference>
<dbReference type="Gene3D" id="3.30.300.10">
    <property type="match status" value="3"/>
</dbReference>
<dbReference type="HAMAP" id="MF_00086">
    <property type="entry name" value="S_AdoMet_synth1"/>
    <property type="match status" value="1"/>
</dbReference>
<dbReference type="InterPro" id="IPR022631">
    <property type="entry name" value="ADOMET_SYNTHASE_CS"/>
</dbReference>
<dbReference type="InterPro" id="IPR022630">
    <property type="entry name" value="S-AdoMet_synt_C"/>
</dbReference>
<dbReference type="InterPro" id="IPR022629">
    <property type="entry name" value="S-AdoMet_synt_central"/>
</dbReference>
<dbReference type="InterPro" id="IPR022628">
    <property type="entry name" value="S-AdoMet_synt_N"/>
</dbReference>
<dbReference type="InterPro" id="IPR002133">
    <property type="entry name" value="S-AdoMet_synthetase"/>
</dbReference>
<dbReference type="InterPro" id="IPR022636">
    <property type="entry name" value="S-AdoMet_synthetase_sfam"/>
</dbReference>
<dbReference type="NCBIfam" id="TIGR01034">
    <property type="entry name" value="metK"/>
    <property type="match status" value="1"/>
</dbReference>
<dbReference type="PANTHER" id="PTHR11964">
    <property type="entry name" value="S-ADENOSYLMETHIONINE SYNTHETASE"/>
    <property type="match status" value="1"/>
</dbReference>
<dbReference type="Pfam" id="PF02773">
    <property type="entry name" value="S-AdoMet_synt_C"/>
    <property type="match status" value="1"/>
</dbReference>
<dbReference type="Pfam" id="PF02772">
    <property type="entry name" value="S-AdoMet_synt_M"/>
    <property type="match status" value="1"/>
</dbReference>
<dbReference type="Pfam" id="PF00438">
    <property type="entry name" value="S-AdoMet_synt_N"/>
    <property type="match status" value="1"/>
</dbReference>
<dbReference type="PIRSF" id="PIRSF000497">
    <property type="entry name" value="MAT"/>
    <property type="match status" value="1"/>
</dbReference>
<dbReference type="SUPFAM" id="SSF55973">
    <property type="entry name" value="S-adenosylmethionine synthetase"/>
    <property type="match status" value="3"/>
</dbReference>
<dbReference type="PROSITE" id="PS00376">
    <property type="entry name" value="ADOMET_SYNTHASE_1"/>
    <property type="match status" value="1"/>
</dbReference>
<dbReference type="PROSITE" id="PS00377">
    <property type="entry name" value="ADOMET_SYNTHASE_2"/>
    <property type="match status" value="1"/>
</dbReference>
<feature type="chain" id="PRO_0000241020" description="S-adenosylmethionine synthase">
    <location>
        <begin position="1"/>
        <end position="396"/>
    </location>
</feature>
<feature type="region of interest" description="Flexible loop" evidence="1">
    <location>
        <begin position="100"/>
        <end position="110"/>
    </location>
</feature>
<feature type="binding site" description="in other chain" evidence="1">
    <location>
        <position position="16"/>
    </location>
    <ligand>
        <name>ATP</name>
        <dbReference type="ChEBI" id="CHEBI:30616"/>
        <note>ligand shared between two neighboring subunits</note>
    </ligand>
</feature>
<feature type="binding site" evidence="1">
    <location>
        <position position="18"/>
    </location>
    <ligand>
        <name>Mg(2+)</name>
        <dbReference type="ChEBI" id="CHEBI:18420"/>
    </ligand>
</feature>
<feature type="binding site" evidence="1">
    <location>
        <position position="44"/>
    </location>
    <ligand>
        <name>K(+)</name>
        <dbReference type="ChEBI" id="CHEBI:29103"/>
    </ligand>
</feature>
<feature type="binding site" description="in other chain" evidence="1">
    <location>
        <position position="57"/>
    </location>
    <ligand>
        <name>L-methionine</name>
        <dbReference type="ChEBI" id="CHEBI:57844"/>
        <note>ligand shared between two neighboring subunits</note>
    </ligand>
</feature>
<feature type="binding site" description="in other chain" evidence="1">
    <location>
        <position position="100"/>
    </location>
    <ligand>
        <name>L-methionine</name>
        <dbReference type="ChEBI" id="CHEBI:57844"/>
        <note>ligand shared between two neighboring subunits</note>
    </ligand>
</feature>
<feature type="binding site" description="in other chain" evidence="1">
    <location>
        <begin position="165"/>
        <end position="167"/>
    </location>
    <ligand>
        <name>ATP</name>
        <dbReference type="ChEBI" id="CHEBI:30616"/>
        <note>ligand shared between two neighboring subunits</note>
    </ligand>
</feature>
<feature type="binding site" evidence="1">
    <location>
        <position position="240"/>
    </location>
    <ligand>
        <name>ATP</name>
        <dbReference type="ChEBI" id="CHEBI:30616"/>
        <note>ligand shared between two neighboring subunits</note>
    </ligand>
</feature>
<feature type="binding site" evidence="1">
    <location>
        <position position="240"/>
    </location>
    <ligand>
        <name>L-methionine</name>
        <dbReference type="ChEBI" id="CHEBI:57844"/>
        <note>ligand shared between two neighboring subunits</note>
    </ligand>
</feature>
<feature type="binding site" description="in other chain" evidence="1">
    <location>
        <begin position="246"/>
        <end position="247"/>
    </location>
    <ligand>
        <name>ATP</name>
        <dbReference type="ChEBI" id="CHEBI:30616"/>
        <note>ligand shared between two neighboring subunits</note>
    </ligand>
</feature>
<feature type="binding site" evidence="1">
    <location>
        <position position="263"/>
    </location>
    <ligand>
        <name>ATP</name>
        <dbReference type="ChEBI" id="CHEBI:30616"/>
        <note>ligand shared between two neighboring subunits</note>
    </ligand>
</feature>
<feature type="binding site" evidence="1">
    <location>
        <position position="267"/>
    </location>
    <ligand>
        <name>ATP</name>
        <dbReference type="ChEBI" id="CHEBI:30616"/>
        <note>ligand shared between two neighboring subunits</note>
    </ligand>
</feature>
<feature type="binding site" description="in other chain" evidence="1">
    <location>
        <position position="271"/>
    </location>
    <ligand>
        <name>L-methionine</name>
        <dbReference type="ChEBI" id="CHEBI:57844"/>
        <note>ligand shared between two neighboring subunits</note>
    </ligand>
</feature>
<reference key="1">
    <citation type="journal article" date="2005" name="J. Bacteriol.">
        <title>Whole-genome sequence analysis of Pseudomonas syringae pv. phaseolicola 1448A reveals divergence among pathovars in genes involved in virulence and transposition.</title>
        <authorList>
            <person name="Joardar V."/>
            <person name="Lindeberg M."/>
            <person name="Jackson R.W."/>
            <person name="Selengut J."/>
            <person name="Dodson R."/>
            <person name="Brinkac L.M."/>
            <person name="Daugherty S.C."/>
            <person name="DeBoy R.T."/>
            <person name="Durkin A.S."/>
            <person name="Gwinn Giglio M."/>
            <person name="Madupu R."/>
            <person name="Nelson W.C."/>
            <person name="Rosovitz M.J."/>
            <person name="Sullivan S.A."/>
            <person name="Crabtree J."/>
            <person name="Creasy T."/>
            <person name="Davidsen T.M."/>
            <person name="Haft D.H."/>
            <person name="Zafar N."/>
            <person name="Zhou L."/>
            <person name="Halpin R."/>
            <person name="Holley T."/>
            <person name="Khouri H.M."/>
            <person name="Feldblyum T.V."/>
            <person name="White O."/>
            <person name="Fraser C.M."/>
            <person name="Chatterjee A.K."/>
            <person name="Cartinhour S."/>
            <person name="Schneider D."/>
            <person name="Mansfield J.W."/>
            <person name="Collmer A."/>
            <person name="Buell R."/>
        </authorList>
    </citation>
    <scope>NUCLEOTIDE SEQUENCE [LARGE SCALE GENOMIC DNA]</scope>
    <source>
        <strain>1448A / Race 6</strain>
    </source>
</reference>
<name>METK_PSE14</name>
<proteinExistence type="inferred from homology"/>
<protein>
    <recommendedName>
        <fullName evidence="1">S-adenosylmethionine synthase</fullName>
        <shortName evidence="1">AdoMet synthase</shortName>
        <ecNumber evidence="1">2.5.1.6</ecNumber>
    </recommendedName>
    <alternativeName>
        <fullName evidence="1">MAT</fullName>
    </alternativeName>
    <alternativeName>
        <fullName evidence="1">Methionine adenosyltransferase</fullName>
    </alternativeName>
</protein>
<comment type="function">
    <text evidence="1">Catalyzes the formation of S-adenosylmethionine (AdoMet) from methionine and ATP. The overall synthetic reaction is composed of two sequential steps, AdoMet formation and the subsequent tripolyphosphate hydrolysis which occurs prior to release of AdoMet from the enzyme.</text>
</comment>
<comment type="catalytic activity">
    <reaction evidence="1">
        <text>L-methionine + ATP + H2O = S-adenosyl-L-methionine + phosphate + diphosphate</text>
        <dbReference type="Rhea" id="RHEA:21080"/>
        <dbReference type="ChEBI" id="CHEBI:15377"/>
        <dbReference type="ChEBI" id="CHEBI:30616"/>
        <dbReference type="ChEBI" id="CHEBI:33019"/>
        <dbReference type="ChEBI" id="CHEBI:43474"/>
        <dbReference type="ChEBI" id="CHEBI:57844"/>
        <dbReference type="ChEBI" id="CHEBI:59789"/>
        <dbReference type="EC" id="2.5.1.6"/>
    </reaction>
</comment>
<comment type="cofactor">
    <cofactor evidence="1">
        <name>Mg(2+)</name>
        <dbReference type="ChEBI" id="CHEBI:18420"/>
    </cofactor>
    <text evidence="1">Binds 2 divalent ions per subunit.</text>
</comment>
<comment type="cofactor">
    <cofactor evidence="1">
        <name>K(+)</name>
        <dbReference type="ChEBI" id="CHEBI:29103"/>
    </cofactor>
    <text evidence="1">Binds 1 potassium ion per subunit.</text>
</comment>
<comment type="pathway">
    <text evidence="1">Amino-acid biosynthesis; S-adenosyl-L-methionine biosynthesis; S-adenosyl-L-methionine from L-methionine: step 1/1.</text>
</comment>
<comment type="subunit">
    <text evidence="1">Homotetramer; dimer of dimers.</text>
</comment>
<comment type="subcellular location">
    <subcellularLocation>
        <location evidence="1">Cytoplasm</location>
    </subcellularLocation>
</comment>
<comment type="similarity">
    <text evidence="1">Belongs to the AdoMet synthase family.</text>
</comment>
<evidence type="ECO:0000255" key="1">
    <source>
        <dbReference type="HAMAP-Rule" id="MF_00086"/>
    </source>
</evidence>
<keyword id="KW-0067">ATP-binding</keyword>
<keyword id="KW-0963">Cytoplasm</keyword>
<keyword id="KW-0460">Magnesium</keyword>
<keyword id="KW-0479">Metal-binding</keyword>
<keyword id="KW-0547">Nucleotide-binding</keyword>
<keyword id="KW-0554">One-carbon metabolism</keyword>
<keyword id="KW-0630">Potassium</keyword>
<keyword id="KW-0808">Transferase</keyword>
<organism>
    <name type="scientific">Pseudomonas savastanoi pv. phaseolicola (strain 1448A / Race 6)</name>
    <name type="common">Pseudomonas syringae pv. phaseolicola (strain 1448A / Race 6)</name>
    <dbReference type="NCBI Taxonomy" id="264730"/>
    <lineage>
        <taxon>Bacteria</taxon>
        <taxon>Pseudomonadati</taxon>
        <taxon>Pseudomonadota</taxon>
        <taxon>Gammaproteobacteria</taxon>
        <taxon>Pseudomonadales</taxon>
        <taxon>Pseudomonadaceae</taxon>
        <taxon>Pseudomonas</taxon>
    </lineage>
</organism>
<sequence length="396" mass="42631">MSEYSLFTSESVSEGHPDKIADQISDAVLDAIIAEDKYARVACETLVKTGVAIIAGEVSTSAWVDLEDIVRNVILDIGYNSSDVGFDGATCGVMNIIGKQSVDIAQGVDRSKPEDQGAGDQGLMFGYASNETDVLMPAPITFSHQLVQRQAEARKSGLLPWLRPDAKSQVTCRYENGKVVGVDAIVLSTQHNPDVSYKDLREGVMELIVKHVIPAHLLHKDTQFHINPTGNFIIGGPVGDCGLTGRKIIVDTYGGMARHGGGAFSGKDPSKVDRSAAYAGRYVAKNIVAAGLAERCEIQVSYAIGVAQPMSISLNTFGTGKLSDDKIIKLVRDNFDLRPYAITTMLDLLHPMYQATAAYGHFGRTPVEMTIGDDTFTAFTWEKTDRADALRAAAGL</sequence>
<gene>
    <name evidence="1" type="primary">metK</name>
    <name type="ordered locus">PSPPH_4823</name>
</gene>